<evidence type="ECO:0000255" key="1">
    <source>
        <dbReference type="HAMAP-Rule" id="MF_00121"/>
    </source>
</evidence>
<dbReference type="EC" id="6.3.5.-" evidence="1"/>
<dbReference type="EMBL" id="CP000803">
    <property type="protein sequence ID" value="ABU62423.2"/>
    <property type="molecule type" value="Genomic_DNA"/>
</dbReference>
<dbReference type="RefSeq" id="WP_003017411.1">
    <property type="nucleotide sequence ID" value="NC_009749.1"/>
</dbReference>
<dbReference type="SMR" id="A7NEM0"/>
<dbReference type="KEGG" id="fta:FTA_1948"/>
<dbReference type="HOGENOM" id="CLU_019240_0_0_6"/>
<dbReference type="GO" id="GO:0050566">
    <property type="term" value="F:asparaginyl-tRNA synthase (glutamine-hydrolyzing) activity"/>
    <property type="evidence" value="ECO:0007669"/>
    <property type="project" value="RHEA"/>
</dbReference>
<dbReference type="GO" id="GO:0005524">
    <property type="term" value="F:ATP binding"/>
    <property type="evidence" value="ECO:0007669"/>
    <property type="project" value="UniProtKB-KW"/>
</dbReference>
<dbReference type="GO" id="GO:0050567">
    <property type="term" value="F:glutaminyl-tRNA synthase (glutamine-hydrolyzing) activity"/>
    <property type="evidence" value="ECO:0007669"/>
    <property type="project" value="UniProtKB-UniRule"/>
</dbReference>
<dbReference type="GO" id="GO:0070681">
    <property type="term" value="P:glutaminyl-tRNAGln biosynthesis via transamidation"/>
    <property type="evidence" value="ECO:0007669"/>
    <property type="project" value="TreeGrafter"/>
</dbReference>
<dbReference type="GO" id="GO:0006412">
    <property type="term" value="P:translation"/>
    <property type="evidence" value="ECO:0007669"/>
    <property type="project" value="UniProtKB-UniRule"/>
</dbReference>
<dbReference type="FunFam" id="1.10.10.410:FF:000001">
    <property type="entry name" value="Aspartyl/glutamyl-tRNA(Asn/Gln) amidotransferase subunit B"/>
    <property type="match status" value="1"/>
</dbReference>
<dbReference type="Gene3D" id="1.10.10.410">
    <property type="match status" value="1"/>
</dbReference>
<dbReference type="HAMAP" id="MF_00121">
    <property type="entry name" value="GatB"/>
    <property type="match status" value="1"/>
</dbReference>
<dbReference type="InterPro" id="IPR017959">
    <property type="entry name" value="Asn/Gln-tRNA_amidoTrfase_suB/E"/>
</dbReference>
<dbReference type="InterPro" id="IPR006075">
    <property type="entry name" value="Asn/Gln-tRNA_Trfase_suB/E_cat"/>
</dbReference>
<dbReference type="InterPro" id="IPR018027">
    <property type="entry name" value="Asn/Gln_amidotransferase"/>
</dbReference>
<dbReference type="InterPro" id="IPR003789">
    <property type="entry name" value="Asn/Gln_tRNA_amidoTrase-B-like"/>
</dbReference>
<dbReference type="InterPro" id="IPR004413">
    <property type="entry name" value="GatB"/>
</dbReference>
<dbReference type="InterPro" id="IPR023168">
    <property type="entry name" value="GatB_Yqey_C_2"/>
</dbReference>
<dbReference type="InterPro" id="IPR017958">
    <property type="entry name" value="Gln-tRNA_amidoTrfase_suB_CS"/>
</dbReference>
<dbReference type="InterPro" id="IPR014746">
    <property type="entry name" value="Gln_synth/guanido_kin_cat_dom"/>
</dbReference>
<dbReference type="NCBIfam" id="TIGR00133">
    <property type="entry name" value="gatB"/>
    <property type="match status" value="1"/>
</dbReference>
<dbReference type="NCBIfam" id="NF004012">
    <property type="entry name" value="PRK05477.1-2"/>
    <property type="match status" value="1"/>
</dbReference>
<dbReference type="NCBIfam" id="NF004014">
    <property type="entry name" value="PRK05477.1-4"/>
    <property type="match status" value="1"/>
</dbReference>
<dbReference type="PANTHER" id="PTHR11659">
    <property type="entry name" value="GLUTAMYL-TRNA GLN AMIDOTRANSFERASE SUBUNIT B MITOCHONDRIAL AND PROKARYOTIC PET112-RELATED"/>
    <property type="match status" value="1"/>
</dbReference>
<dbReference type="PANTHER" id="PTHR11659:SF0">
    <property type="entry name" value="GLUTAMYL-TRNA(GLN) AMIDOTRANSFERASE SUBUNIT B, MITOCHONDRIAL"/>
    <property type="match status" value="1"/>
</dbReference>
<dbReference type="Pfam" id="PF02934">
    <property type="entry name" value="GatB_N"/>
    <property type="match status" value="1"/>
</dbReference>
<dbReference type="Pfam" id="PF02637">
    <property type="entry name" value="GatB_Yqey"/>
    <property type="match status" value="1"/>
</dbReference>
<dbReference type="SMART" id="SM00845">
    <property type="entry name" value="GatB_Yqey"/>
    <property type="match status" value="1"/>
</dbReference>
<dbReference type="SUPFAM" id="SSF89095">
    <property type="entry name" value="GatB/YqeY motif"/>
    <property type="match status" value="1"/>
</dbReference>
<dbReference type="SUPFAM" id="SSF55931">
    <property type="entry name" value="Glutamine synthetase/guanido kinase"/>
    <property type="match status" value="1"/>
</dbReference>
<dbReference type="PROSITE" id="PS01234">
    <property type="entry name" value="GATB"/>
    <property type="match status" value="1"/>
</dbReference>
<proteinExistence type="inferred from homology"/>
<accession>A7NEM0</accession>
<name>GATB_FRATF</name>
<organism>
    <name type="scientific">Francisella tularensis subsp. holarctica (strain FTNF002-00 / FTA)</name>
    <dbReference type="NCBI Taxonomy" id="458234"/>
    <lineage>
        <taxon>Bacteria</taxon>
        <taxon>Pseudomonadati</taxon>
        <taxon>Pseudomonadota</taxon>
        <taxon>Gammaproteobacteria</taxon>
        <taxon>Thiotrichales</taxon>
        <taxon>Francisellaceae</taxon>
        <taxon>Francisella</taxon>
    </lineage>
</organism>
<reference key="1">
    <citation type="journal article" date="2009" name="PLoS ONE">
        <title>Complete genome sequence of Francisella tularensis subspecies holarctica FTNF002-00.</title>
        <authorList>
            <person name="Barabote R.D."/>
            <person name="Xie G."/>
            <person name="Brettin T.S."/>
            <person name="Hinrichs S.H."/>
            <person name="Fey P.D."/>
            <person name="Jay J.J."/>
            <person name="Engle J.L."/>
            <person name="Godbole S.D."/>
            <person name="Noronha J.M."/>
            <person name="Scheuermann R.H."/>
            <person name="Zhou L.W."/>
            <person name="Lion C."/>
            <person name="Dempsey M.P."/>
        </authorList>
    </citation>
    <scope>NUCLEOTIDE SEQUENCE [LARGE SCALE GENOMIC DNA]</scope>
    <source>
        <strain>FTNF002-00 / FTA</strain>
    </source>
</reference>
<gene>
    <name evidence="1" type="primary">gatB</name>
    <name type="ordered locus">FTA_1948</name>
</gene>
<keyword id="KW-0067">ATP-binding</keyword>
<keyword id="KW-0436">Ligase</keyword>
<keyword id="KW-0547">Nucleotide-binding</keyword>
<keyword id="KW-0648">Protein biosynthesis</keyword>
<sequence>MNWEMVIGLEVHIQLSTKSKLFSTSATKYGQHQNTQAAFLDLGLPGTLPVVNKEAIRKAVIFGLAVDAKISKDSFFARKNYFYPDLSKGYQISQSTNPIVQEGRLEIETSKGLKTIRIERAHLEEDAGKSVHGYIAGETGLDYNRAGTPLLEIVTYPDFRSAEEVVAYLKKLHQLVKHLGICDGNMQEGSFRCDVNLSIRPQGQAKFGTRAELKNINSFRFIDKAIEYEYARQVSVLESGGEVVQETRLYDADANETRSMRAKEDAFDYRYFPDPDLLPLVITDEYIESIKKQMPLKSEEREAVYREHLAEQEVEFLLSNLEIADYYDKVAVVIGYKPAYNWITVDLISTLNRAEKEFSSDVVPAEILLEIIANVQKDIISQANAKKVIAEYIDAPSAIEAIIEKLGLKQVSDEGMIRELVQGIIAANPQQAADFKAGKTKLMSFFVGQAMKASKGKANPKQVNQIVQEELNK</sequence>
<comment type="function">
    <text evidence="1">Allows the formation of correctly charged Asn-tRNA(Asn) or Gln-tRNA(Gln) through the transamidation of misacylated Asp-tRNA(Asn) or Glu-tRNA(Gln) in organisms which lack either or both of asparaginyl-tRNA or glutaminyl-tRNA synthetases. The reaction takes place in the presence of glutamine and ATP through an activated phospho-Asp-tRNA(Asn) or phospho-Glu-tRNA(Gln).</text>
</comment>
<comment type="catalytic activity">
    <reaction evidence="1">
        <text>L-glutamyl-tRNA(Gln) + L-glutamine + ATP + H2O = L-glutaminyl-tRNA(Gln) + L-glutamate + ADP + phosphate + H(+)</text>
        <dbReference type="Rhea" id="RHEA:17521"/>
        <dbReference type="Rhea" id="RHEA-COMP:9681"/>
        <dbReference type="Rhea" id="RHEA-COMP:9684"/>
        <dbReference type="ChEBI" id="CHEBI:15377"/>
        <dbReference type="ChEBI" id="CHEBI:15378"/>
        <dbReference type="ChEBI" id="CHEBI:29985"/>
        <dbReference type="ChEBI" id="CHEBI:30616"/>
        <dbReference type="ChEBI" id="CHEBI:43474"/>
        <dbReference type="ChEBI" id="CHEBI:58359"/>
        <dbReference type="ChEBI" id="CHEBI:78520"/>
        <dbReference type="ChEBI" id="CHEBI:78521"/>
        <dbReference type="ChEBI" id="CHEBI:456216"/>
    </reaction>
</comment>
<comment type="catalytic activity">
    <reaction evidence="1">
        <text>L-aspartyl-tRNA(Asn) + L-glutamine + ATP + H2O = L-asparaginyl-tRNA(Asn) + L-glutamate + ADP + phosphate + 2 H(+)</text>
        <dbReference type="Rhea" id="RHEA:14513"/>
        <dbReference type="Rhea" id="RHEA-COMP:9674"/>
        <dbReference type="Rhea" id="RHEA-COMP:9677"/>
        <dbReference type="ChEBI" id="CHEBI:15377"/>
        <dbReference type="ChEBI" id="CHEBI:15378"/>
        <dbReference type="ChEBI" id="CHEBI:29985"/>
        <dbReference type="ChEBI" id="CHEBI:30616"/>
        <dbReference type="ChEBI" id="CHEBI:43474"/>
        <dbReference type="ChEBI" id="CHEBI:58359"/>
        <dbReference type="ChEBI" id="CHEBI:78515"/>
        <dbReference type="ChEBI" id="CHEBI:78516"/>
        <dbReference type="ChEBI" id="CHEBI:456216"/>
    </reaction>
</comment>
<comment type="subunit">
    <text evidence="1">Heterotrimer of A, B and C subunits.</text>
</comment>
<comment type="similarity">
    <text evidence="1">Belongs to the GatB/GatE family. GatB subfamily.</text>
</comment>
<protein>
    <recommendedName>
        <fullName evidence="1">Aspartyl/glutamyl-tRNA(Asn/Gln) amidotransferase subunit B</fullName>
        <shortName evidence="1">Asp/Glu-ADT subunit B</shortName>
        <ecNumber evidence="1">6.3.5.-</ecNumber>
    </recommendedName>
</protein>
<feature type="chain" id="PRO_1000076160" description="Aspartyl/glutamyl-tRNA(Asn/Gln) amidotransferase subunit B">
    <location>
        <begin position="1"/>
        <end position="473"/>
    </location>
</feature>